<feature type="chain" id="PRO_0000135756" description="Histidinol dehydrogenase">
    <location>
        <begin position="1"/>
        <end position="431"/>
    </location>
</feature>
<feature type="active site" description="Proton acceptor" evidence="1">
    <location>
        <position position="329"/>
    </location>
</feature>
<feature type="active site" description="Proton acceptor" evidence="1">
    <location>
        <position position="330"/>
    </location>
</feature>
<feature type="binding site" evidence="1">
    <location>
        <position position="131"/>
    </location>
    <ligand>
        <name>NAD(+)</name>
        <dbReference type="ChEBI" id="CHEBI:57540"/>
    </ligand>
</feature>
<feature type="binding site" evidence="1">
    <location>
        <position position="193"/>
    </location>
    <ligand>
        <name>NAD(+)</name>
        <dbReference type="ChEBI" id="CHEBI:57540"/>
    </ligand>
</feature>
<feature type="binding site" evidence="1">
    <location>
        <position position="216"/>
    </location>
    <ligand>
        <name>NAD(+)</name>
        <dbReference type="ChEBI" id="CHEBI:57540"/>
    </ligand>
</feature>
<feature type="binding site" evidence="1">
    <location>
        <position position="239"/>
    </location>
    <ligand>
        <name>substrate</name>
    </ligand>
</feature>
<feature type="binding site" evidence="1">
    <location>
        <position position="261"/>
    </location>
    <ligand>
        <name>substrate</name>
    </ligand>
</feature>
<feature type="binding site" evidence="1">
    <location>
        <position position="261"/>
    </location>
    <ligand>
        <name>Zn(2+)</name>
        <dbReference type="ChEBI" id="CHEBI:29105"/>
    </ligand>
</feature>
<feature type="binding site" evidence="1">
    <location>
        <position position="264"/>
    </location>
    <ligand>
        <name>substrate</name>
    </ligand>
</feature>
<feature type="binding site" evidence="1">
    <location>
        <position position="264"/>
    </location>
    <ligand>
        <name>Zn(2+)</name>
        <dbReference type="ChEBI" id="CHEBI:29105"/>
    </ligand>
</feature>
<feature type="binding site" evidence="1">
    <location>
        <position position="330"/>
    </location>
    <ligand>
        <name>substrate</name>
    </ligand>
</feature>
<feature type="binding site" evidence="1">
    <location>
        <position position="363"/>
    </location>
    <ligand>
        <name>substrate</name>
    </ligand>
</feature>
<feature type="binding site" evidence="1">
    <location>
        <position position="363"/>
    </location>
    <ligand>
        <name>Zn(2+)</name>
        <dbReference type="ChEBI" id="CHEBI:29105"/>
    </ligand>
</feature>
<feature type="binding site" evidence="1">
    <location>
        <position position="417"/>
    </location>
    <ligand>
        <name>substrate</name>
    </ligand>
</feature>
<feature type="binding site" evidence="1">
    <location>
        <position position="422"/>
    </location>
    <ligand>
        <name>substrate</name>
    </ligand>
</feature>
<feature type="binding site" evidence="1">
    <location>
        <position position="422"/>
    </location>
    <ligand>
        <name>Zn(2+)</name>
        <dbReference type="ChEBI" id="CHEBI:29105"/>
    </ligand>
</feature>
<organism>
    <name type="scientific">Clostridium acetobutylicum (strain ATCC 824 / DSM 792 / JCM 1419 / IAM 19013 / LMG 5710 / NBRC 13948 / NRRL B-527 / VKM B-1787 / 2291 / W)</name>
    <dbReference type="NCBI Taxonomy" id="272562"/>
    <lineage>
        <taxon>Bacteria</taxon>
        <taxon>Bacillati</taxon>
        <taxon>Bacillota</taxon>
        <taxon>Clostridia</taxon>
        <taxon>Eubacteriales</taxon>
        <taxon>Clostridiaceae</taxon>
        <taxon>Clostridium</taxon>
    </lineage>
</organism>
<evidence type="ECO:0000255" key="1">
    <source>
        <dbReference type="HAMAP-Rule" id="MF_01024"/>
    </source>
</evidence>
<gene>
    <name evidence="1" type="primary">hisD</name>
    <name type="ordered locus">CA_C0937</name>
</gene>
<reference key="1">
    <citation type="journal article" date="2001" name="J. Bacteriol.">
        <title>Genome sequence and comparative analysis of the solvent-producing bacterium Clostridium acetobutylicum.</title>
        <authorList>
            <person name="Noelling J."/>
            <person name="Breton G."/>
            <person name="Omelchenko M.V."/>
            <person name="Makarova K.S."/>
            <person name="Zeng Q."/>
            <person name="Gibson R."/>
            <person name="Lee H.M."/>
            <person name="Dubois J."/>
            <person name="Qiu D."/>
            <person name="Hitti J."/>
            <person name="Wolf Y.I."/>
            <person name="Tatusov R.L."/>
            <person name="Sabathe F."/>
            <person name="Doucette-Stamm L.A."/>
            <person name="Soucaille P."/>
            <person name="Daly M.J."/>
            <person name="Bennett G.N."/>
            <person name="Koonin E.V."/>
            <person name="Smith D.R."/>
        </authorList>
    </citation>
    <scope>NUCLEOTIDE SEQUENCE [LARGE SCALE GENOMIC DNA]</scope>
    <source>
        <strain>ATCC 824 / DSM 792 / JCM 1419 / IAM 19013 / LMG 5710 / NBRC 13948 / NRRL B-527 / VKM B-1787 / 2291 / W</strain>
    </source>
</reference>
<dbReference type="EC" id="1.1.1.23" evidence="1"/>
<dbReference type="EMBL" id="AE001437">
    <property type="protein sequence ID" value="AAK78913.1"/>
    <property type="molecule type" value="Genomic_DNA"/>
</dbReference>
<dbReference type="PIR" id="F97015">
    <property type="entry name" value="F97015"/>
</dbReference>
<dbReference type="RefSeq" id="NP_347573.1">
    <property type="nucleotide sequence ID" value="NC_003030.1"/>
</dbReference>
<dbReference type="RefSeq" id="WP_010964255.1">
    <property type="nucleotide sequence ID" value="NC_003030.1"/>
</dbReference>
<dbReference type="SMR" id="Q97KI2"/>
<dbReference type="STRING" id="272562.CA_C0937"/>
<dbReference type="GeneID" id="44997447"/>
<dbReference type="KEGG" id="cac:CA_C0937"/>
<dbReference type="PATRIC" id="fig|272562.8.peg.1147"/>
<dbReference type="eggNOG" id="COG0141">
    <property type="taxonomic scope" value="Bacteria"/>
</dbReference>
<dbReference type="HOGENOM" id="CLU_006732_3_0_9"/>
<dbReference type="OrthoDB" id="9805269at2"/>
<dbReference type="UniPathway" id="UPA00031">
    <property type="reaction ID" value="UER00014"/>
</dbReference>
<dbReference type="Proteomes" id="UP000000814">
    <property type="component" value="Chromosome"/>
</dbReference>
<dbReference type="GO" id="GO:0005829">
    <property type="term" value="C:cytosol"/>
    <property type="evidence" value="ECO:0007669"/>
    <property type="project" value="TreeGrafter"/>
</dbReference>
<dbReference type="GO" id="GO:0004399">
    <property type="term" value="F:histidinol dehydrogenase activity"/>
    <property type="evidence" value="ECO:0007669"/>
    <property type="project" value="UniProtKB-UniRule"/>
</dbReference>
<dbReference type="GO" id="GO:0051287">
    <property type="term" value="F:NAD binding"/>
    <property type="evidence" value="ECO:0007669"/>
    <property type="project" value="InterPro"/>
</dbReference>
<dbReference type="GO" id="GO:0008270">
    <property type="term" value="F:zinc ion binding"/>
    <property type="evidence" value="ECO:0007669"/>
    <property type="project" value="UniProtKB-UniRule"/>
</dbReference>
<dbReference type="GO" id="GO:0000105">
    <property type="term" value="P:L-histidine biosynthetic process"/>
    <property type="evidence" value="ECO:0007669"/>
    <property type="project" value="UniProtKB-UniRule"/>
</dbReference>
<dbReference type="CDD" id="cd06572">
    <property type="entry name" value="Histidinol_dh"/>
    <property type="match status" value="1"/>
</dbReference>
<dbReference type="FunFam" id="3.40.50.1980:FF:000001">
    <property type="entry name" value="Histidinol dehydrogenase"/>
    <property type="match status" value="1"/>
</dbReference>
<dbReference type="FunFam" id="3.40.50.1980:FF:000026">
    <property type="entry name" value="Histidinol dehydrogenase"/>
    <property type="match status" value="1"/>
</dbReference>
<dbReference type="FunFam" id="1.20.5.1300:FF:000002">
    <property type="entry name" value="Histidinol dehydrogenase, chloroplastic"/>
    <property type="match status" value="1"/>
</dbReference>
<dbReference type="Gene3D" id="1.20.5.1300">
    <property type="match status" value="1"/>
</dbReference>
<dbReference type="Gene3D" id="3.40.50.1980">
    <property type="entry name" value="Nitrogenase molybdenum iron protein domain"/>
    <property type="match status" value="2"/>
</dbReference>
<dbReference type="HAMAP" id="MF_01024">
    <property type="entry name" value="HisD"/>
    <property type="match status" value="1"/>
</dbReference>
<dbReference type="InterPro" id="IPR016161">
    <property type="entry name" value="Ald_DH/histidinol_DH"/>
</dbReference>
<dbReference type="InterPro" id="IPR001692">
    <property type="entry name" value="Histidinol_DH_CS"/>
</dbReference>
<dbReference type="InterPro" id="IPR022695">
    <property type="entry name" value="Histidinol_DH_monofunct"/>
</dbReference>
<dbReference type="InterPro" id="IPR012131">
    <property type="entry name" value="Hstdl_DH"/>
</dbReference>
<dbReference type="NCBIfam" id="TIGR00069">
    <property type="entry name" value="hisD"/>
    <property type="match status" value="1"/>
</dbReference>
<dbReference type="PANTHER" id="PTHR21256:SF2">
    <property type="entry name" value="HISTIDINE BIOSYNTHESIS TRIFUNCTIONAL PROTEIN"/>
    <property type="match status" value="1"/>
</dbReference>
<dbReference type="PANTHER" id="PTHR21256">
    <property type="entry name" value="HISTIDINOL DEHYDROGENASE HDH"/>
    <property type="match status" value="1"/>
</dbReference>
<dbReference type="Pfam" id="PF00815">
    <property type="entry name" value="Histidinol_dh"/>
    <property type="match status" value="1"/>
</dbReference>
<dbReference type="PIRSF" id="PIRSF000099">
    <property type="entry name" value="Histidinol_dh"/>
    <property type="match status" value="1"/>
</dbReference>
<dbReference type="PRINTS" id="PR00083">
    <property type="entry name" value="HOLDHDRGNASE"/>
</dbReference>
<dbReference type="SUPFAM" id="SSF53720">
    <property type="entry name" value="ALDH-like"/>
    <property type="match status" value="1"/>
</dbReference>
<dbReference type="PROSITE" id="PS00611">
    <property type="entry name" value="HISOL_DEHYDROGENASE"/>
    <property type="match status" value="1"/>
</dbReference>
<name>HISX_CLOAB</name>
<keyword id="KW-0028">Amino-acid biosynthesis</keyword>
<keyword id="KW-0368">Histidine biosynthesis</keyword>
<keyword id="KW-0479">Metal-binding</keyword>
<keyword id="KW-0520">NAD</keyword>
<keyword id="KW-0560">Oxidoreductase</keyword>
<keyword id="KW-1185">Reference proteome</keyword>
<keyword id="KW-0862">Zinc</keyword>
<proteinExistence type="inferred from homology"/>
<sequence length="431" mass="46930">MEDIIRIIQDGSLDGEKYFQSLKERQGKENAEIIKTVKFIIDNVKENGDKALIEYTSKFDKVELQSIEVTKEEIKAAYSKVENDFICALKTAKENIEEYHSKQVQNSYVITKENGIVMGRTVRGLDKVGIYVPGGTAAYPSSVIMNAVPAKVAGVNKIIMTTPPMKDGFVNPSILVAADLAGVDKIYKVGGAQAIAALAFGTETIDKVDKIVGPGNIFVAMAKKSVYGFVDIDMIAGPSEILVISDETGNPKFIAADLMSQAEHDTLASSILVTTSKELIGKVIEEIKLQVEGLSRKEIILEALRNFGAIILVDSISRAIEIGNVVAPEHLEIITPNPFEYLNDIKNAGSIFLGSYSPEPLGDYMAGPNHVLPTSGTARFSSPLSVDDFVKKSSYLYYSEKALRNVNDKVVKIAETEGLTAHANSIKVRFK</sequence>
<accession>Q97KI2</accession>
<protein>
    <recommendedName>
        <fullName evidence="1">Histidinol dehydrogenase</fullName>
        <shortName evidence="1">HDH</shortName>
        <ecNumber evidence="1">1.1.1.23</ecNumber>
    </recommendedName>
</protein>
<comment type="function">
    <text evidence="1">Catalyzes the sequential NAD-dependent oxidations of L-histidinol to L-histidinaldehyde and then to L-histidine.</text>
</comment>
<comment type="catalytic activity">
    <reaction evidence="1">
        <text>L-histidinol + 2 NAD(+) + H2O = L-histidine + 2 NADH + 3 H(+)</text>
        <dbReference type="Rhea" id="RHEA:20641"/>
        <dbReference type="ChEBI" id="CHEBI:15377"/>
        <dbReference type="ChEBI" id="CHEBI:15378"/>
        <dbReference type="ChEBI" id="CHEBI:57540"/>
        <dbReference type="ChEBI" id="CHEBI:57595"/>
        <dbReference type="ChEBI" id="CHEBI:57699"/>
        <dbReference type="ChEBI" id="CHEBI:57945"/>
        <dbReference type="EC" id="1.1.1.23"/>
    </reaction>
</comment>
<comment type="cofactor">
    <cofactor evidence="1">
        <name>Zn(2+)</name>
        <dbReference type="ChEBI" id="CHEBI:29105"/>
    </cofactor>
    <text evidence="1">Binds 1 zinc ion per subunit.</text>
</comment>
<comment type="pathway">
    <text evidence="1">Amino-acid biosynthesis; L-histidine biosynthesis; L-histidine from 5-phospho-alpha-D-ribose 1-diphosphate: step 9/9.</text>
</comment>
<comment type="similarity">
    <text evidence="1">Belongs to the histidinol dehydrogenase family.</text>
</comment>